<sequence>MVGVGTDVHPFQTGRPLFLAGLEWPDEVGLSGHSDGDVAAHAACDALFSACALGDLGSQFGTSDPRWRGASGVALLTEAAQRVRAAGYEIGNIAIQIIGNRPKFAPRRHEAEKVLSAAVGAPVSCAATTTDGLGFTGRGEGIAAVATALCVRVR</sequence>
<protein>
    <recommendedName>
        <fullName evidence="1">2-C-methyl-D-erythritol 2,4-cyclodiphosphate synthase</fullName>
        <shortName evidence="1">MECDP-synthase</shortName>
        <shortName evidence="1">MECPP-synthase</shortName>
        <shortName evidence="1">MECPS</shortName>
        <ecNumber evidence="1">4.6.1.12</ecNumber>
    </recommendedName>
</protein>
<evidence type="ECO:0000255" key="1">
    <source>
        <dbReference type="HAMAP-Rule" id="MF_00107"/>
    </source>
</evidence>
<gene>
    <name evidence="1" type="primary">ispF</name>
    <name type="ordered locus">Tfu_2906</name>
</gene>
<accession>Q47KT3</accession>
<dbReference type="EC" id="4.6.1.12" evidence="1"/>
<dbReference type="EMBL" id="CP000088">
    <property type="protein sequence ID" value="AAZ56939.1"/>
    <property type="molecule type" value="Genomic_DNA"/>
</dbReference>
<dbReference type="RefSeq" id="WP_011293329.1">
    <property type="nucleotide sequence ID" value="NC_007333.1"/>
</dbReference>
<dbReference type="SMR" id="Q47KT3"/>
<dbReference type="STRING" id="269800.Tfu_2906"/>
<dbReference type="KEGG" id="tfu:Tfu_2906"/>
<dbReference type="eggNOG" id="COG0245">
    <property type="taxonomic scope" value="Bacteria"/>
</dbReference>
<dbReference type="HOGENOM" id="CLU_084630_1_0_11"/>
<dbReference type="OrthoDB" id="9804336at2"/>
<dbReference type="UniPathway" id="UPA00056">
    <property type="reaction ID" value="UER00095"/>
</dbReference>
<dbReference type="GO" id="GO:0008685">
    <property type="term" value="F:2-C-methyl-D-erythritol 2,4-cyclodiphosphate synthase activity"/>
    <property type="evidence" value="ECO:0007669"/>
    <property type="project" value="UniProtKB-UniRule"/>
</dbReference>
<dbReference type="GO" id="GO:0046872">
    <property type="term" value="F:metal ion binding"/>
    <property type="evidence" value="ECO:0007669"/>
    <property type="project" value="UniProtKB-KW"/>
</dbReference>
<dbReference type="GO" id="GO:0019288">
    <property type="term" value="P:isopentenyl diphosphate biosynthetic process, methylerythritol 4-phosphate pathway"/>
    <property type="evidence" value="ECO:0007669"/>
    <property type="project" value="UniProtKB-UniRule"/>
</dbReference>
<dbReference type="GO" id="GO:0016114">
    <property type="term" value="P:terpenoid biosynthetic process"/>
    <property type="evidence" value="ECO:0007669"/>
    <property type="project" value="InterPro"/>
</dbReference>
<dbReference type="CDD" id="cd00554">
    <property type="entry name" value="MECDP_synthase"/>
    <property type="match status" value="1"/>
</dbReference>
<dbReference type="FunFam" id="3.30.1330.50:FF:000003">
    <property type="entry name" value="2-C-methyl-D-erythritol 2,4-cyclodiphosphate synthase"/>
    <property type="match status" value="1"/>
</dbReference>
<dbReference type="Gene3D" id="3.30.1330.50">
    <property type="entry name" value="2-C-methyl-D-erythritol 2,4-cyclodiphosphate synthase"/>
    <property type="match status" value="1"/>
</dbReference>
<dbReference type="HAMAP" id="MF_00107">
    <property type="entry name" value="IspF"/>
    <property type="match status" value="1"/>
</dbReference>
<dbReference type="InterPro" id="IPR003526">
    <property type="entry name" value="MECDP_synthase"/>
</dbReference>
<dbReference type="InterPro" id="IPR020555">
    <property type="entry name" value="MECDP_synthase_CS"/>
</dbReference>
<dbReference type="InterPro" id="IPR036571">
    <property type="entry name" value="MECDP_synthase_sf"/>
</dbReference>
<dbReference type="NCBIfam" id="TIGR00151">
    <property type="entry name" value="ispF"/>
    <property type="match status" value="1"/>
</dbReference>
<dbReference type="PANTHER" id="PTHR43181">
    <property type="entry name" value="2-C-METHYL-D-ERYTHRITOL 2,4-CYCLODIPHOSPHATE SYNTHASE, CHLOROPLASTIC"/>
    <property type="match status" value="1"/>
</dbReference>
<dbReference type="PANTHER" id="PTHR43181:SF1">
    <property type="entry name" value="2-C-METHYL-D-ERYTHRITOL 2,4-CYCLODIPHOSPHATE SYNTHASE, CHLOROPLASTIC"/>
    <property type="match status" value="1"/>
</dbReference>
<dbReference type="Pfam" id="PF02542">
    <property type="entry name" value="YgbB"/>
    <property type="match status" value="1"/>
</dbReference>
<dbReference type="SUPFAM" id="SSF69765">
    <property type="entry name" value="IpsF-like"/>
    <property type="match status" value="1"/>
</dbReference>
<dbReference type="PROSITE" id="PS01350">
    <property type="entry name" value="ISPF"/>
    <property type="match status" value="1"/>
</dbReference>
<name>ISPF_THEFY</name>
<comment type="function">
    <text evidence="1">Involved in the biosynthesis of isopentenyl diphosphate (IPP) and dimethylallyl diphosphate (DMAPP), two major building blocks of isoprenoid compounds. Catalyzes the conversion of 4-diphosphocytidyl-2-C-methyl-D-erythritol 2-phosphate (CDP-ME2P) to 2-C-methyl-D-erythritol 2,4-cyclodiphosphate (ME-CPP) with a corresponding release of cytidine 5-monophosphate (CMP).</text>
</comment>
<comment type="catalytic activity">
    <reaction evidence="1">
        <text>4-CDP-2-C-methyl-D-erythritol 2-phosphate = 2-C-methyl-D-erythritol 2,4-cyclic diphosphate + CMP</text>
        <dbReference type="Rhea" id="RHEA:23864"/>
        <dbReference type="ChEBI" id="CHEBI:57919"/>
        <dbReference type="ChEBI" id="CHEBI:58483"/>
        <dbReference type="ChEBI" id="CHEBI:60377"/>
        <dbReference type="EC" id="4.6.1.12"/>
    </reaction>
</comment>
<comment type="cofactor">
    <cofactor evidence="1">
        <name>a divalent metal cation</name>
        <dbReference type="ChEBI" id="CHEBI:60240"/>
    </cofactor>
    <text evidence="1">Binds 1 divalent metal cation per subunit.</text>
</comment>
<comment type="pathway">
    <text evidence="1">Isoprenoid biosynthesis; isopentenyl diphosphate biosynthesis via DXP pathway; isopentenyl diphosphate from 1-deoxy-D-xylulose 5-phosphate: step 4/6.</text>
</comment>
<comment type="subunit">
    <text evidence="1">Homotrimer.</text>
</comment>
<comment type="similarity">
    <text evidence="1">Belongs to the IspF family.</text>
</comment>
<keyword id="KW-0414">Isoprene biosynthesis</keyword>
<keyword id="KW-0456">Lyase</keyword>
<keyword id="KW-0479">Metal-binding</keyword>
<proteinExistence type="inferred from homology"/>
<feature type="chain" id="PRO_0000237761" description="2-C-methyl-D-erythritol 2,4-cyclodiphosphate synthase">
    <location>
        <begin position="1"/>
        <end position="154"/>
    </location>
</feature>
<feature type="binding site" evidence="1">
    <location>
        <begin position="7"/>
        <end position="9"/>
    </location>
    <ligand>
        <name>4-CDP-2-C-methyl-D-erythritol 2-phosphate</name>
        <dbReference type="ChEBI" id="CHEBI:57919"/>
    </ligand>
</feature>
<feature type="binding site" evidence="1">
    <location>
        <position position="7"/>
    </location>
    <ligand>
        <name>a divalent metal cation</name>
        <dbReference type="ChEBI" id="CHEBI:60240"/>
    </ligand>
</feature>
<feature type="binding site" evidence="1">
    <location>
        <position position="9"/>
    </location>
    <ligand>
        <name>a divalent metal cation</name>
        <dbReference type="ChEBI" id="CHEBI:60240"/>
    </ligand>
</feature>
<feature type="binding site" evidence="1">
    <location>
        <begin position="33"/>
        <end position="34"/>
    </location>
    <ligand>
        <name>4-CDP-2-C-methyl-D-erythritol 2-phosphate</name>
        <dbReference type="ChEBI" id="CHEBI:57919"/>
    </ligand>
</feature>
<feature type="binding site" evidence="1">
    <location>
        <position position="41"/>
    </location>
    <ligand>
        <name>a divalent metal cation</name>
        <dbReference type="ChEBI" id="CHEBI:60240"/>
    </ligand>
</feature>
<feature type="binding site" evidence="1">
    <location>
        <begin position="55"/>
        <end position="57"/>
    </location>
    <ligand>
        <name>4-CDP-2-C-methyl-D-erythritol 2-phosphate</name>
        <dbReference type="ChEBI" id="CHEBI:57919"/>
    </ligand>
</feature>
<feature type="binding site" evidence="1">
    <location>
        <begin position="128"/>
        <end position="131"/>
    </location>
    <ligand>
        <name>4-CDP-2-C-methyl-D-erythritol 2-phosphate</name>
        <dbReference type="ChEBI" id="CHEBI:57919"/>
    </ligand>
</feature>
<feature type="binding site" evidence="1">
    <location>
        <position position="135"/>
    </location>
    <ligand>
        <name>4-CDP-2-C-methyl-D-erythritol 2-phosphate</name>
        <dbReference type="ChEBI" id="CHEBI:57919"/>
    </ligand>
</feature>
<feature type="binding site" evidence="1">
    <location>
        <position position="138"/>
    </location>
    <ligand>
        <name>4-CDP-2-C-methyl-D-erythritol 2-phosphate</name>
        <dbReference type="ChEBI" id="CHEBI:57919"/>
    </ligand>
</feature>
<feature type="site" description="Transition state stabilizer" evidence="1">
    <location>
        <position position="33"/>
    </location>
</feature>
<feature type="site" description="Transition state stabilizer" evidence="1">
    <location>
        <position position="129"/>
    </location>
</feature>
<organism>
    <name type="scientific">Thermobifida fusca (strain YX)</name>
    <dbReference type="NCBI Taxonomy" id="269800"/>
    <lineage>
        <taxon>Bacteria</taxon>
        <taxon>Bacillati</taxon>
        <taxon>Actinomycetota</taxon>
        <taxon>Actinomycetes</taxon>
        <taxon>Streptosporangiales</taxon>
        <taxon>Nocardiopsidaceae</taxon>
        <taxon>Thermobifida</taxon>
    </lineage>
</organism>
<reference key="1">
    <citation type="journal article" date="2007" name="J. Bacteriol.">
        <title>Genome sequence and analysis of the soil cellulolytic actinomycete Thermobifida fusca YX.</title>
        <authorList>
            <person name="Lykidis A."/>
            <person name="Mavromatis K."/>
            <person name="Ivanova N."/>
            <person name="Anderson I."/>
            <person name="Land M."/>
            <person name="DiBartolo G."/>
            <person name="Martinez M."/>
            <person name="Lapidus A."/>
            <person name="Lucas S."/>
            <person name="Copeland A."/>
            <person name="Richardson P."/>
            <person name="Wilson D.B."/>
            <person name="Kyrpides N."/>
        </authorList>
    </citation>
    <scope>NUCLEOTIDE SEQUENCE [LARGE SCALE GENOMIC DNA]</scope>
    <source>
        <strain>YX</strain>
    </source>
</reference>